<accession>A1WYZ4</accession>
<organism>
    <name type="scientific">Halorhodospira halophila (strain DSM 244 / SL1)</name>
    <name type="common">Ectothiorhodospira halophila (strain DSM 244 / SL1)</name>
    <dbReference type="NCBI Taxonomy" id="349124"/>
    <lineage>
        <taxon>Bacteria</taxon>
        <taxon>Pseudomonadati</taxon>
        <taxon>Pseudomonadota</taxon>
        <taxon>Gammaproteobacteria</taxon>
        <taxon>Chromatiales</taxon>
        <taxon>Ectothiorhodospiraceae</taxon>
        <taxon>Halorhodospira</taxon>
    </lineage>
</organism>
<comment type="function">
    <text evidence="1">Catalyzes the NADPH-dependent reduction of L-glutamate 5-phosphate into L-glutamate 5-semialdehyde and phosphate. The product spontaneously undergoes cyclization to form 1-pyrroline-5-carboxylate.</text>
</comment>
<comment type="catalytic activity">
    <reaction evidence="1">
        <text>L-glutamate 5-semialdehyde + phosphate + NADP(+) = L-glutamyl 5-phosphate + NADPH + H(+)</text>
        <dbReference type="Rhea" id="RHEA:19541"/>
        <dbReference type="ChEBI" id="CHEBI:15378"/>
        <dbReference type="ChEBI" id="CHEBI:43474"/>
        <dbReference type="ChEBI" id="CHEBI:57783"/>
        <dbReference type="ChEBI" id="CHEBI:58066"/>
        <dbReference type="ChEBI" id="CHEBI:58274"/>
        <dbReference type="ChEBI" id="CHEBI:58349"/>
        <dbReference type="EC" id="1.2.1.41"/>
    </reaction>
</comment>
<comment type="pathway">
    <text evidence="1">Amino-acid biosynthesis; L-proline biosynthesis; L-glutamate 5-semialdehyde from L-glutamate: step 2/2.</text>
</comment>
<comment type="subcellular location">
    <subcellularLocation>
        <location evidence="1">Cytoplasm</location>
    </subcellularLocation>
</comment>
<comment type="similarity">
    <text evidence="1">Belongs to the gamma-glutamyl phosphate reductase family.</text>
</comment>
<gene>
    <name evidence="1" type="primary">proA</name>
    <name type="ordered locus">Hhal_2142</name>
</gene>
<keyword id="KW-0028">Amino-acid biosynthesis</keyword>
<keyword id="KW-0963">Cytoplasm</keyword>
<keyword id="KW-0521">NADP</keyword>
<keyword id="KW-0560">Oxidoreductase</keyword>
<keyword id="KW-0641">Proline biosynthesis</keyword>
<keyword id="KW-1185">Reference proteome</keyword>
<name>PROA_HALHL</name>
<evidence type="ECO:0000255" key="1">
    <source>
        <dbReference type="HAMAP-Rule" id="MF_00412"/>
    </source>
</evidence>
<reference key="1">
    <citation type="submission" date="2006-12" db="EMBL/GenBank/DDBJ databases">
        <title>Complete sequence of Halorhodospira halophila SL1.</title>
        <authorList>
            <consortium name="US DOE Joint Genome Institute"/>
            <person name="Copeland A."/>
            <person name="Lucas S."/>
            <person name="Lapidus A."/>
            <person name="Barry K."/>
            <person name="Detter J.C."/>
            <person name="Glavina del Rio T."/>
            <person name="Hammon N."/>
            <person name="Israni S."/>
            <person name="Dalin E."/>
            <person name="Tice H."/>
            <person name="Pitluck S."/>
            <person name="Saunders E."/>
            <person name="Brettin T."/>
            <person name="Bruce D."/>
            <person name="Han C."/>
            <person name="Tapia R."/>
            <person name="Schmutz J."/>
            <person name="Larimer F."/>
            <person name="Land M."/>
            <person name="Hauser L."/>
            <person name="Kyrpides N."/>
            <person name="Mikhailova N."/>
            <person name="Hoff W."/>
            <person name="Richardson P."/>
        </authorList>
    </citation>
    <scope>NUCLEOTIDE SEQUENCE [LARGE SCALE GENOMIC DNA]</scope>
    <source>
        <strain>DSM 244 / SL1</strain>
    </source>
</reference>
<dbReference type="EC" id="1.2.1.41" evidence="1"/>
<dbReference type="EMBL" id="CP000544">
    <property type="protein sequence ID" value="ABM62906.1"/>
    <property type="molecule type" value="Genomic_DNA"/>
</dbReference>
<dbReference type="RefSeq" id="WP_011814928.1">
    <property type="nucleotide sequence ID" value="NC_008789.1"/>
</dbReference>
<dbReference type="SMR" id="A1WYZ4"/>
<dbReference type="STRING" id="349124.Hhal_2142"/>
<dbReference type="KEGG" id="hha:Hhal_2142"/>
<dbReference type="eggNOG" id="COG0014">
    <property type="taxonomic scope" value="Bacteria"/>
</dbReference>
<dbReference type="HOGENOM" id="CLU_030231_0_0_6"/>
<dbReference type="OrthoDB" id="9809970at2"/>
<dbReference type="UniPathway" id="UPA00098">
    <property type="reaction ID" value="UER00360"/>
</dbReference>
<dbReference type="Proteomes" id="UP000000647">
    <property type="component" value="Chromosome"/>
</dbReference>
<dbReference type="GO" id="GO:0005737">
    <property type="term" value="C:cytoplasm"/>
    <property type="evidence" value="ECO:0007669"/>
    <property type="project" value="UniProtKB-SubCell"/>
</dbReference>
<dbReference type="GO" id="GO:0004350">
    <property type="term" value="F:glutamate-5-semialdehyde dehydrogenase activity"/>
    <property type="evidence" value="ECO:0007669"/>
    <property type="project" value="UniProtKB-UniRule"/>
</dbReference>
<dbReference type="GO" id="GO:0050661">
    <property type="term" value="F:NADP binding"/>
    <property type="evidence" value="ECO:0007669"/>
    <property type="project" value="InterPro"/>
</dbReference>
<dbReference type="GO" id="GO:0055129">
    <property type="term" value="P:L-proline biosynthetic process"/>
    <property type="evidence" value="ECO:0007669"/>
    <property type="project" value="UniProtKB-UniRule"/>
</dbReference>
<dbReference type="CDD" id="cd07079">
    <property type="entry name" value="ALDH_F18-19_ProA-GPR"/>
    <property type="match status" value="1"/>
</dbReference>
<dbReference type="FunFam" id="3.40.309.10:FF:000006">
    <property type="entry name" value="Gamma-glutamyl phosphate reductase"/>
    <property type="match status" value="1"/>
</dbReference>
<dbReference type="Gene3D" id="3.40.605.10">
    <property type="entry name" value="Aldehyde Dehydrogenase, Chain A, domain 1"/>
    <property type="match status" value="1"/>
</dbReference>
<dbReference type="Gene3D" id="3.40.309.10">
    <property type="entry name" value="Aldehyde Dehydrogenase, Chain A, domain 2"/>
    <property type="match status" value="1"/>
</dbReference>
<dbReference type="HAMAP" id="MF_00412">
    <property type="entry name" value="ProA"/>
    <property type="match status" value="1"/>
</dbReference>
<dbReference type="InterPro" id="IPR016161">
    <property type="entry name" value="Ald_DH/histidinol_DH"/>
</dbReference>
<dbReference type="InterPro" id="IPR016163">
    <property type="entry name" value="Ald_DH_C"/>
</dbReference>
<dbReference type="InterPro" id="IPR016162">
    <property type="entry name" value="Ald_DH_N"/>
</dbReference>
<dbReference type="InterPro" id="IPR015590">
    <property type="entry name" value="Aldehyde_DH_dom"/>
</dbReference>
<dbReference type="InterPro" id="IPR020593">
    <property type="entry name" value="G-glutamylP_reductase_CS"/>
</dbReference>
<dbReference type="InterPro" id="IPR012134">
    <property type="entry name" value="Glu-5-SA_DH"/>
</dbReference>
<dbReference type="InterPro" id="IPR000965">
    <property type="entry name" value="GPR_dom"/>
</dbReference>
<dbReference type="NCBIfam" id="NF001221">
    <property type="entry name" value="PRK00197.1"/>
    <property type="match status" value="1"/>
</dbReference>
<dbReference type="NCBIfam" id="TIGR00407">
    <property type="entry name" value="proA"/>
    <property type="match status" value="1"/>
</dbReference>
<dbReference type="PANTHER" id="PTHR11063:SF8">
    <property type="entry name" value="DELTA-1-PYRROLINE-5-CARBOXYLATE SYNTHASE"/>
    <property type="match status" value="1"/>
</dbReference>
<dbReference type="PANTHER" id="PTHR11063">
    <property type="entry name" value="GLUTAMATE SEMIALDEHYDE DEHYDROGENASE"/>
    <property type="match status" value="1"/>
</dbReference>
<dbReference type="Pfam" id="PF00171">
    <property type="entry name" value="Aldedh"/>
    <property type="match status" value="2"/>
</dbReference>
<dbReference type="PIRSF" id="PIRSF000151">
    <property type="entry name" value="GPR"/>
    <property type="match status" value="1"/>
</dbReference>
<dbReference type="SUPFAM" id="SSF53720">
    <property type="entry name" value="ALDH-like"/>
    <property type="match status" value="1"/>
</dbReference>
<dbReference type="PROSITE" id="PS01223">
    <property type="entry name" value="PROA"/>
    <property type="match status" value="1"/>
</dbReference>
<feature type="chain" id="PRO_0000340884" description="Gamma-glutamyl phosphate reductase">
    <location>
        <begin position="1"/>
        <end position="424"/>
    </location>
</feature>
<protein>
    <recommendedName>
        <fullName evidence="1">Gamma-glutamyl phosphate reductase</fullName>
        <shortName evidence="1">GPR</shortName>
        <ecNumber evidence="1">1.2.1.41</ecNumber>
    </recommendedName>
    <alternativeName>
        <fullName evidence="1">Glutamate-5-semialdehyde dehydrogenase</fullName>
    </alternativeName>
    <alternativeName>
        <fullName evidence="1">Glutamyl-gamma-semialdehyde dehydrogenase</fullName>
        <shortName evidence="1">GSA dehydrogenase</shortName>
    </alternativeName>
</protein>
<proteinExistence type="inferred from homology"/>
<sequence length="424" mass="44591">MSAEHSSDIAETIRRIGQQARAAGRALARSGTGARNDALAAIAARIEAGSEAIAAANAADLEAAREAGLDPALIDRMELTPGRIQAMADGLREIAALPDPVGAVRELASRPSGIQVGRMRMPIGVIGIIYESRPNVTADAAGLCIKSGNATILRGGSEAIRSNRAIAEQIRAGLEDAGLPGDGVQVVGTTDRDAVGALIQMPESVDVIVPRGGKGLVERIAREARVPVIKHLDGVCHVYIDEAADTEKAVAIAVNAKTQRLGTCNTMETLLVAEAAAERVLPEVGRQLRDAGIEVRGCERTRALIDEAVPATEEDWTTEYLGPTLAVRVVAGFDDAVAHIERYSSGHTEAIVTESYPLAQRFLREVDSSSVMVNASTRFADGQEYGLGAEIGISTDKLHARGPVGLEGLTTEKWIVLGDGHVRS</sequence>